<organism>
    <name type="scientific">Epichloe festucae var. lolii</name>
    <name type="common">Neotyphodium lolii</name>
    <name type="synonym">Acremonium lolii</name>
    <dbReference type="NCBI Taxonomy" id="73839"/>
    <lineage>
        <taxon>Eukaryota</taxon>
        <taxon>Fungi</taxon>
        <taxon>Dikarya</taxon>
        <taxon>Ascomycota</taxon>
        <taxon>Pezizomycotina</taxon>
        <taxon>Sordariomycetes</taxon>
        <taxon>Hypocreomycetidae</taxon>
        <taxon>Hypocreales</taxon>
        <taxon>Clavicipitaceae</taxon>
        <taxon>Epichloe</taxon>
    </lineage>
</organism>
<dbReference type="EC" id="2.3.1.-" evidence="9"/>
<dbReference type="EMBL" id="EF125025">
    <property type="protein sequence ID" value="ABM91454.1"/>
    <property type="molecule type" value="Genomic_DNA"/>
</dbReference>
<dbReference type="SMR" id="A2TBU4"/>
<dbReference type="UniPathway" id="UPA00327"/>
<dbReference type="GO" id="GO:0005737">
    <property type="term" value="C:cytoplasm"/>
    <property type="evidence" value="ECO:0007669"/>
    <property type="project" value="TreeGrafter"/>
</dbReference>
<dbReference type="GO" id="GO:0016874">
    <property type="term" value="F:ligase activity"/>
    <property type="evidence" value="ECO:0007669"/>
    <property type="project" value="UniProtKB-KW"/>
</dbReference>
<dbReference type="GO" id="GO:0031177">
    <property type="term" value="F:phosphopantetheine binding"/>
    <property type="evidence" value="ECO:0007669"/>
    <property type="project" value="TreeGrafter"/>
</dbReference>
<dbReference type="GO" id="GO:0016740">
    <property type="term" value="F:transferase activity"/>
    <property type="evidence" value="ECO:0007669"/>
    <property type="project" value="UniProtKB-KW"/>
</dbReference>
<dbReference type="GO" id="GO:0043041">
    <property type="term" value="P:amino acid activation for nonribosomal peptide biosynthetic process"/>
    <property type="evidence" value="ECO:0007669"/>
    <property type="project" value="TreeGrafter"/>
</dbReference>
<dbReference type="GO" id="GO:0035835">
    <property type="term" value="P:indole alkaloid biosynthetic process"/>
    <property type="evidence" value="ECO:0007669"/>
    <property type="project" value="UniProtKB-UniPathway"/>
</dbReference>
<dbReference type="CDD" id="cd05918">
    <property type="entry name" value="A_NRPS_SidN3_like"/>
    <property type="match status" value="1"/>
</dbReference>
<dbReference type="CDD" id="cd19545">
    <property type="entry name" value="FUM14_C_NRPS-like"/>
    <property type="match status" value="1"/>
</dbReference>
<dbReference type="FunFam" id="3.40.50.980:FF:000001">
    <property type="entry name" value="Non-ribosomal peptide synthetase"/>
    <property type="match status" value="1"/>
</dbReference>
<dbReference type="FunFam" id="3.30.300.30:FF:000015">
    <property type="entry name" value="Nonribosomal peptide synthase SidD"/>
    <property type="match status" value="1"/>
</dbReference>
<dbReference type="FunFam" id="1.10.1200.10:FF:000005">
    <property type="entry name" value="Nonribosomal peptide synthetase 1"/>
    <property type="match status" value="1"/>
</dbReference>
<dbReference type="FunFam" id="3.40.50.12780:FF:000014">
    <property type="entry name" value="Nonribosomal peptide synthetase 1"/>
    <property type="match status" value="1"/>
</dbReference>
<dbReference type="Gene3D" id="3.30.300.30">
    <property type="match status" value="1"/>
</dbReference>
<dbReference type="Gene3D" id="3.40.50.980">
    <property type="match status" value="2"/>
</dbReference>
<dbReference type="Gene3D" id="1.10.1200.10">
    <property type="entry name" value="ACP-like"/>
    <property type="match status" value="1"/>
</dbReference>
<dbReference type="Gene3D" id="3.30.559.10">
    <property type="entry name" value="Chloramphenicol acetyltransferase-like domain"/>
    <property type="match status" value="1"/>
</dbReference>
<dbReference type="Gene3D" id="2.30.38.10">
    <property type="entry name" value="Luciferase, Domain 3"/>
    <property type="match status" value="1"/>
</dbReference>
<dbReference type="Gene3D" id="3.30.559.30">
    <property type="entry name" value="Nonribosomal peptide synthetase, condensation domain"/>
    <property type="match status" value="2"/>
</dbReference>
<dbReference type="InterPro" id="IPR010071">
    <property type="entry name" value="AA_adenyl_dom"/>
</dbReference>
<dbReference type="InterPro" id="IPR036736">
    <property type="entry name" value="ACP-like_sf"/>
</dbReference>
<dbReference type="InterPro" id="IPR045851">
    <property type="entry name" value="AMP-bd_C_sf"/>
</dbReference>
<dbReference type="InterPro" id="IPR000873">
    <property type="entry name" value="AMP-dep_synth/lig_dom"/>
</dbReference>
<dbReference type="InterPro" id="IPR023213">
    <property type="entry name" value="CAT-like_dom_sf"/>
</dbReference>
<dbReference type="InterPro" id="IPR001242">
    <property type="entry name" value="Condensatn"/>
</dbReference>
<dbReference type="InterPro" id="IPR009081">
    <property type="entry name" value="PP-bd_ACP"/>
</dbReference>
<dbReference type="NCBIfam" id="TIGR01733">
    <property type="entry name" value="AA-adenyl-dom"/>
    <property type="match status" value="1"/>
</dbReference>
<dbReference type="PANTHER" id="PTHR45527:SF1">
    <property type="entry name" value="FATTY ACID SYNTHASE"/>
    <property type="match status" value="1"/>
</dbReference>
<dbReference type="PANTHER" id="PTHR45527">
    <property type="entry name" value="NONRIBOSOMAL PEPTIDE SYNTHETASE"/>
    <property type="match status" value="1"/>
</dbReference>
<dbReference type="Pfam" id="PF00501">
    <property type="entry name" value="AMP-binding"/>
    <property type="match status" value="1"/>
</dbReference>
<dbReference type="Pfam" id="PF00668">
    <property type="entry name" value="Condensation"/>
    <property type="match status" value="2"/>
</dbReference>
<dbReference type="Pfam" id="PF00550">
    <property type="entry name" value="PP-binding"/>
    <property type="match status" value="1"/>
</dbReference>
<dbReference type="SUPFAM" id="SSF56801">
    <property type="entry name" value="Acetyl-CoA synthetase-like"/>
    <property type="match status" value="1"/>
</dbReference>
<dbReference type="SUPFAM" id="SSF47336">
    <property type="entry name" value="ACP-like"/>
    <property type="match status" value="1"/>
</dbReference>
<dbReference type="SUPFAM" id="SSF52777">
    <property type="entry name" value="CoA-dependent acyltransferases"/>
    <property type="match status" value="3"/>
</dbReference>
<dbReference type="PROSITE" id="PS50075">
    <property type="entry name" value="CARRIER"/>
    <property type="match status" value="1"/>
</dbReference>
<keyword id="KW-0436">Ligase</keyword>
<keyword id="KW-0596">Phosphopantetheine</keyword>
<keyword id="KW-0597">Phosphoprotein</keyword>
<keyword id="KW-0808">Transferase</keyword>
<name>LPSB_EPIFI</name>
<reference key="1">
    <citation type="journal article" date="2007" name="Appl. Environ. Microbiol.">
        <title>A complex ergovaline gene cluster in epichloe endophytes of grasses.</title>
        <authorList>
            <person name="Fleetwood D.J."/>
            <person name="Scott B."/>
            <person name="Lane G.A."/>
            <person name="Tanaka A."/>
            <person name="Johnson R.D."/>
        </authorList>
    </citation>
    <scope>NUCLEOTIDE SEQUENCE [GENOMIC DNA]</scope>
    <scope>FUNCTION</scope>
    <scope>INDUCTION</scope>
    <scope>DISRUPTION PHENOTYPE</scope>
    <source>
        <strain>Lp19</strain>
    </source>
</reference>
<reference key="2">
    <citation type="journal article" date="2001" name="Proc. Natl. Acad. Sci. U.S.A.">
        <title>Elimination of ergovaline from a grass-Neotyphodium endophyte symbiosis by genetic modification of the endophyte.</title>
        <authorList>
            <person name="Panaccione D.G."/>
            <person name="Johnson R.D."/>
            <person name="Wang J."/>
            <person name="Young C.A."/>
            <person name="Damrongkool P."/>
            <person name="Scott B."/>
            <person name="Schardl C.L."/>
        </authorList>
    </citation>
    <scope>FUNCTION</scope>
</reference>
<accession>A2TBU4</accession>
<feature type="chain" id="PRO_0000439112" description="D-lysergyl-peptide-synthetase subunit 2">
    <location>
        <begin position="1"/>
        <end position="1351"/>
    </location>
</feature>
<feature type="domain" description="Carrier" evidence="4">
    <location>
        <begin position="828"/>
        <end position="904"/>
    </location>
</feature>
<feature type="region of interest" description="Adenylation (A) domain" evidence="3">
    <location>
        <begin position="285"/>
        <end position="684"/>
    </location>
</feature>
<feature type="region of interest" description="Condensation (C) domain" evidence="3">
    <location>
        <begin position="941"/>
        <end position="1340"/>
    </location>
</feature>
<feature type="modified residue" description="O-(pantetheine 4'-phosphoryl)serine" evidence="4">
    <location>
        <position position="865"/>
    </location>
</feature>
<protein>
    <recommendedName>
        <fullName evidence="7">D-lysergyl-peptide-synthetase subunit 2</fullName>
        <shortName evidence="8">LPS2</shortName>
        <ecNumber evidence="9">2.3.1.-</ecNumber>
    </recommendedName>
    <alternativeName>
        <fullName evidence="7">Ergot alkaloid synthesis protein B</fullName>
    </alternativeName>
    <alternativeName>
        <fullName evidence="7">Nonribosomal peptide synthetase lpsB</fullName>
    </alternativeName>
</protein>
<sequence length="1351" mass="147939">MQSQVRLPSNGNPALSFPQNEIGGPVHWKTYLEGCSPCSFPSLRTVCPSQSWPASVSITIGDSIFRRLEHFSDKTGISVATVFRASWGLVLRIYTGQDSVCFGDMTTAPGGIDAIGCVGVCRVELSDTAVISKVLQRIQAASANKLAIPHVPLSDAVLSKCMPSASLFNTCMLISGGGERPEKTSSTFEKVELGYDDQYDIIVRGSVEDSGASAALSYRTSFLSEEQATSIANTFERAVSDLIGIENRIGQICFLSDLDKSQIYTWNKDPPLRAHSCVDTLIHERCLSQPTASAVNAWDGELSYEELNHLSSKLSRHLVTLGVGAEVFVPLCFEKSRWTTVAMLAVIKAGGAFVLLDPSHPAERLLSICQKVSARLIVASAQHAKLAEDLVTSIVEVGDDKADWLTDKGIKAQTQTRTRRSAAPGDALYAVFTSGSTGTPKGVIIEHGSFHAAVFPYTEAVGLNQESRVFQFSSYAFDVTIFDTLMTLISGGCVCVPSNTERWSDVANAIQRFRVTHSSLTPTVARILDPKDVLTLRTLVLGGEKLVTSDITKWVDQVRLVHLYGASECPIMSIQSMTGVASDFQTTDHATGSNCWIVDPNNHDRLVPIGTIGELVIEGTIVGRGYLDDPEKSSATFIRPPGWLCQVRGSGYHSAVYKSGDLVQYTADGSLRYIGRKDTQVKLRGQRVELGEVEHHVKLTFPNATDVVVELVVTIHASSSRAPILVAFVLISHEADPDPESIRTGRGEGLSQILSEPTDRFCSQIPIVQSQLQQSLPSYMVPGIFLPLMTLPLTSTDKINRKLLRELAGALSREELESYQPSTGPVRAPQTTTEKLLQQYFARVLNIPVEQVGADDHFFQRGGDSLTAMKLVAMARKDKHKLTVQDIFDSPRLSALACVVRSGKVDGNKEPPLEPFSLVNKHRDIIRAAAQQCQLPVRVIEDVYPCTPLQRGLISETLRDSKAFIAHLAVSLPPDIDLQRLQEAWTTVANANPILRTRMVLSASHGLLQVVVREDIRWIVSKNAEAQDFFVGVGKPLVQLVLCCHREGNEVPVQLLLMVHHAVYDGYTLPLIFEQVKAAYNGGTLAPRPAVPFIRYVQSIPDGTGYWNSLMANLQTPIFPALPSKSYQPLPNAIMRHTIITPGSHRQYTPSTYVRLAWAITQAYHQGTCDIFFGTVVSGRNAPVTDIELMTIPTVATIPCRVTLDFQSLVQSALRKIQDDAISGIPFEQLGLPHIRRLGEHAMLACSFQTLLSIQPALPPSTDAWFEQPGSTIDYRANATYAINLFFGLEGDKLKATALYDFNVVKKDKMQSMLVDFGNILQTMHKSPNSLIRDILAVPQQMRGPINSASL</sequence>
<gene>
    <name evidence="7" type="primary">lpsB</name>
</gene>
<proteinExistence type="evidence at transcript level"/>
<comment type="function">
    <text evidence="1 5 6">D-lysergyl-peptide-synthetase subunit 2; part of the gene cluster that mediates the biosynthesis of fungal ergot alkaloid ergovaline, the predominant ergopeptine product in E.festucae var. lolii (PubMed:17308187). DmaW catalyzes the first step of ergot alkaloid biosynthesis by condensing dimethylallyl diphosphate (DMAP) and tryptophan to form 4-dimethylallyl-L-tryptophan (By similarity). The second step is catalyzed by the methyltransferase easF that methylates 4-dimethylallyl-L-tryptophan in the presence of S-adenosyl-L-methionine, resulting in the formation of 4-dimethylallyl-L-abrine (By similarity). The catalase easC and the FAD-dependent oxidoreductase easE then transform 4-dimethylallyl-L-abrine to chanoclavine-I which is further oxidized by easD in the presence of NAD(+), resulting in the formation of chanoclavine-I aldehyde (By similarity). Agroclavine dehydrogenase easG then mediates the conversion of chanoclavine-I aldehyde to agroclavine via a non-enzymatic adduct reaction: the substrate is an iminium intermediate that is formed spontaneously from chanoclavine-I aldehyde in the presence of glutathione (By similarity). The presence of easA is not required to complete this reaction (By similarity). Further conversion of agroclavine to paspalic acid is a two-step process involving oxidation of agroclavine to elymoclavine and of elymoclavine to paspalic acid, the second step being performed by the elymoclavine oxidase cloA (By similarity). Paspalic acid is then further converted to D-lysergic acid (By similarity). Ergovaline is assembled from D-lysergic acid and three different amino acids by the D-lysergyl-peptide-synthetase composed of a monomudular (lpsB) and a trimodular (lpsA) nonribosomal peptide synthetase subunit (PubMed:11592979, PubMed:17308187).</text>
</comment>
<comment type="pathway">
    <text evidence="6">Alkaloid biosynthesis; ergot alkaloid biosynthesis.</text>
</comment>
<comment type="induction">
    <text evidence="6">Strongly expressed in planta but not expressed in axenic culture (PubMed:17308187).</text>
</comment>
<comment type="domain">
    <text evidence="2">NRP synthetases are composed of discrete domains (adenylation (A), thiolation (T) or peptidyl carrier protein (PCP) and condensation (C) domains) which when grouped together are referred to as a single module (By similarity). Each module is responsible for the recognition (via the A domain) and incorporation of a single amino acid into the growing peptide product (By similarity). Thus, an NRP synthetase is generally composed of one or more modules and can terminate in a thioesterase domain (TE) or reductase domain (R) that releases the newly synthesized peptide from the enzyme (By similarity). LpsB is composed of only one module which is required for the activation of D-lysergic acid activation and its incorporation in the final ergot alkaloid (By similarity).</text>
</comment>
<comment type="disruption phenotype">
    <text evidence="6">Aolishes the production of ergovaline and its stereoisomer ergovalinine but accumulates lysergic acid and its C-8 stereoisomer (PubMed:17308187).</text>
</comment>
<comment type="similarity">
    <text evidence="8">Belongs to the NRP synthetase family.</text>
</comment>
<evidence type="ECO:0000250" key="1">
    <source>
        <dbReference type="UniProtKB" id="Q50EL0"/>
    </source>
</evidence>
<evidence type="ECO:0000250" key="2">
    <source>
        <dbReference type="UniProtKB" id="Q8J0L6"/>
    </source>
</evidence>
<evidence type="ECO:0000255" key="3"/>
<evidence type="ECO:0000255" key="4">
    <source>
        <dbReference type="PROSITE-ProRule" id="PRU00258"/>
    </source>
</evidence>
<evidence type="ECO:0000269" key="5">
    <source>
    </source>
</evidence>
<evidence type="ECO:0000269" key="6">
    <source>
    </source>
</evidence>
<evidence type="ECO:0000303" key="7">
    <source>
    </source>
</evidence>
<evidence type="ECO:0000305" key="8"/>
<evidence type="ECO:0000305" key="9">
    <source>
    </source>
</evidence>